<comment type="similarity">
    <text evidence="1">Belongs to the UPF0200 family.</text>
</comment>
<evidence type="ECO:0000255" key="1">
    <source>
        <dbReference type="HAMAP-Rule" id="MF_01111"/>
    </source>
</evidence>
<feature type="chain" id="PRO_1000065152" description="UPF0200 protein Smar_1234">
    <location>
        <begin position="1"/>
        <end position="189"/>
    </location>
</feature>
<feature type="binding site" evidence="1">
    <location>
        <begin position="10"/>
        <end position="17"/>
    </location>
    <ligand>
        <name>ATP</name>
        <dbReference type="ChEBI" id="CHEBI:30616"/>
    </ligand>
</feature>
<gene>
    <name type="ordered locus">Smar_1234</name>
</gene>
<organism>
    <name type="scientific">Staphylothermus marinus (strain ATCC 43588 / DSM 3639 / JCM 9404 / F1)</name>
    <dbReference type="NCBI Taxonomy" id="399550"/>
    <lineage>
        <taxon>Archaea</taxon>
        <taxon>Thermoproteota</taxon>
        <taxon>Thermoprotei</taxon>
        <taxon>Desulfurococcales</taxon>
        <taxon>Desulfurococcaceae</taxon>
        <taxon>Staphylothermus</taxon>
    </lineage>
</organism>
<name>Y1234_STAMF</name>
<dbReference type="EMBL" id="CP000575">
    <property type="protein sequence ID" value="ABN70326.1"/>
    <property type="molecule type" value="Genomic_DNA"/>
</dbReference>
<dbReference type="RefSeq" id="WP_011839517.1">
    <property type="nucleotide sequence ID" value="NC_009033.1"/>
</dbReference>
<dbReference type="SMR" id="A3DNW6"/>
<dbReference type="STRING" id="399550.Smar_1234"/>
<dbReference type="GeneID" id="4907070"/>
<dbReference type="KEGG" id="smr:Smar_1234"/>
<dbReference type="eggNOG" id="arCOG01045">
    <property type="taxonomic scope" value="Archaea"/>
</dbReference>
<dbReference type="HOGENOM" id="CLU_096329_1_0_2"/>
<dbReference type="OrthoDB" id="85381at2157"/>
<dbReference type="Proteomes" id="UP000000254">
    <property type="component" value="Chromosome"/>
</dbReference>
<dbReference type="GO" id="GO:0005524">
    <property type="term" value="F:ATP binding"/>
    <property type="evidence" value="ECO:0007669"/>
    <property type="project" value="UniProtKB-UniRule"/>
</dbReference>
<dbReference type="Gene3D" id="3.40.50.300">
    <property type="entry name" value="P-loop containing nucleotide triphosphate hydrolases"/>
    <property type="match status" value="1"/>
</dbReference>
<dbReference type="HAMAP" id="MF_01111">
    <property type="entry name" value="UPF0200"/>
    <property type="match status" value="1"/>
</dbReference>
<dbReference type="InterPro" id="IPR022970">
    <property type="entry name" value="NTP_hydrolase-rel"/>
</dbReference>
<dbReference type="InterPro" id="IPR027417">
    <property type="entry name" value="P-loop_NTPase"/>
</dbReference>
<dbReference type="PANTHER" id="PTHR41930:SF1">
    <property type="entry name" value="DEPHOSPHO-COA KINASE"/>
    <property type="match status" value="1"/>
</dbReference>
<dbReference type="PANTHER" id="PTHR41930">
    <property type="entry name" value="UPF0200 PROTEIN MJ1399"/>
    <property type="match status" value="1"/>
</dbReference>
<dbReference type="Pfam" id="PF13207">
    <property type="entry name" value="AAA_17"/>
    <property type="match status" value="1"/>
</dbReference>
<dbReference type="SUPFAM" id="SSF52540">
    <property type="entry name" value="P-loop containing nucleoside triphosphate hydrolases"/>
    <property type="match status" value="1"/>
</dbReference>
<sequence length="189" mass="21426">MKLFIVLVAGMPGAGKSIVSKAARDLGLPVYNMGDVIRMETSRLYGIITPETMRETSRRVRKLYGEDYVARKTIEQIKEKRGVIVVDGVRSLVEVEVFKKYAETVILAVHASPKTRFERIRKRNRPGDPDNWEDFVKRDLTELQFGLGNVIALADYMIVNEGSIEEAYRGAYNILKKLVEKNAKDNSDS</sequence>
<proteinExistence type="inferred from homology"/>
<keyword id="KW-0067">ATP-binding</keyword>
<keyword id="KW-0547">Nucleotide-binding</keyword>
<keyword id="KW-1185">Reference proteome</keyword>
<protein>
    <recommendedName>
        <fullName evidence="1">UPF0200 protein Smar_1234</fullName>
    </recommendedName>
</protein>
<accession>A3DNW6</accession>
<reference key="1">
    <citation type="journal article" date="2009" name="BMC Genomics">
        <title>The complete genome sequence of Staphylothermus marinus reveals differences in sulfur metabolism among heterotrophic Crenarchaeota.</title>
        <authorList>
            <person name="Anderson I.J."/>
            <person name="Dharmarajan L."/>
            <person name="Rodriguez J."/>
            <person name="Hooper S."/>
            <person name="Porat I."/>
            <person name="Ulrich L.E."/>
            <person name="Elkins J.G."/>
            <person name="Mavromatis K."/>
            <person name="Sun H."/>
            <person name="Land M."/>
            <person name="Lapidus A."/>
            <person name="Lucas S."/>
            <person name="Barry K."/>
            <person name="Huber H."/>
            <person name="Zhulin I.B."/>
            <person name="Whitman W.B."/>
            <person name="Mukhopadhyay B."/>
            <person name="Woese C."/>
            <person name="Bristow J."/>
            <person name="Kyrpides N."/>
        </authorList>
    </citation>
    <scope>NUCLEOTIDE SEQUENCE [LARGE SCALE GENOMIC DNA]</scope>
    <source>
        <strain>ATCC 43588 / DSM 3639 / JCM 9404 / F1</strain>
    </source>
</reference>
<reference key="2">
    <citation type="journal article" date="2009" name="Stand. Genomic Sci.">
        <title>Complete genome sequence of Staphylothermus marinus Stetter and Fiala 1986 type strain F1.</title>
        <authorList>
            <person name="Anderson I.J."/>
            <person name="Sun H."/>
            <person name="Lapidus A."/>
            <person name="Copeland A."/>
            <person name="Glavina Del Rio T."/>
            <person name="Tice H."/>
            <person name="Dalin E."/>
            <person name="Lucas S."/>
            <person name="Barry K."/>
            <person name="Land M."/>
            <person name="Richardson P."/>
            <person name="Huber H."/>
            <person name="Kyrpides N.C."/>
        </authorList>
    </citation>
    <scope>NUCLEOTIDE SEQUENCE [LARGE SCALE GENOMIC DNA]</scope>
    <source>
        <strain>ATCC 43588 / DSM 3639 / JCM 9404 / F1</strain>
    </source>
</reference>